<accession>C0R2Z7</accession>
<proteinExistence type="inferred from homology"/>
<protein>
    <recommendedName>
        <fullName evidence="1">Large ribosomal subunit protein uL5</fullName>
    </recommendedName>
    <alternativeName>
        <fullName evidence="2">50S ribosomal protein L5</fullName>
    </alternativeName>
</protein>
<sequence>MFKELYKDSIVKSLKDKFNYGNIMQVPKLVKVCINMGVGDAATDSKAINEPLDSLYLIAGQKPLSTFAKKSISGFKIRKGATVGCKVTLRRDKMYEFLERLIYIALPREKDFRGFSVKQFDGNGNFSFGIKEHISFLEIDYDKISKIRGMDINIITSAVSDKEAKELLLALKFPFFD</sequence>
<keyword id="KW-0687">Ribonucleoprotein</keyword>
<keyword id="KW-0689">Ribosomal protein</keyword>
<keyword id="KW-0694">RNA-binding</keyword>
<keyword id="KW-0699">rRNA-binding</keyword>
<keyword id="KW-0820">tRNA-binding</keyword>
<comment type="function">
    <text evidence="1">This is one of the proteins that bind and probably mediate the attachment of the 5S RNA into the large ribosomal subunit, where it forms part of the central protuberance. In the 70S ribosome it contacts protein S13 of the 30S subunit (bridge B1b), connecting the 2 subunits; this bridge is implicated in subunit movement. Contacts the P site tRNA; the 5S rRNA and some of its associated proteins might help stabilize positioning of ribosome-bound tRNAs.</text>
</comment>
<comment type="subunit">
    <text evidence="1">Part of the 50S ribosomal subunit; part of the 5S rRNA/L5/L18/L25 subcomplex. Contacts the 5S rRNA and the P site tRNA. Forms a bridge to the 30S subunit in the 70S ribosome.</text>
</comment>
<comment type="similarity">
    <text evidence="1">Belongs to the universal ribosomal protein uL5 family.</text>
</comment>
<feature type="chain" id="PRO_1000166159" description="Large ribosomal subunit protein uL5">
    <location>
        <begin position="1"/>
        <end position="177"/>
    </location>
</feature>
<dbReference type="EMBL" id="CP001391">
    <property type="protein sequence ID" value="ACN95289.1"/>
    <property type="molecule type" value="Genomic_DNA"/>
</dbReference>
<dbReference type="RefSeq" id="WP_010962750.1">
    <property type="nucleotide sequence ID" value="NZ_MKIF01000201.1"/>
</dbReference>
<dbReference type="SMR" id="C0R2Z7"/>
<dbReference type="STRING" id="66084.WRi_005070"/>
<dbReference type="GeneID" id="70036152"/>
<dbReference type="KEGG" id="wri:WRi_005070"/>
<dbReference type="HOGENOM" id="CLU_061015_2_1_5"/>
<dbReference type="Proteomes" id="UP000001293">
    <property type="component" value="Chromosome"/>
</dbReference>
<dbReference type="GO" id="GO:1990904">
    <property type="term" value="C:ribonucleoprotein complex"/>
    <property type="evidence" value="ECO:0007669"/>
    <property type="project" value="UniProtKB-KW"/>
</dbReference>
<dbReference type="GO" id="GO:0005840">
    <property type="term" value="C:ribosome"/>
    <property type="evidence" value="ECO:0007669"/>
    <property type="project" value="UniProtKB-KW"/>
</dbReference>
<dbReference type="GO" id="GO:0019843">
    <property type="term" value="F:rRNA binding"/>
    <property type="evidence" value="ECO:0007669"/>
    <property type="project" value="UniProtKB-UniRule"/>
</dbReference>
<dbReference type="GO" id="GO:0003735">
    <property type="term" value="F:structural constituent of ribosome"/>
    <property type="evidence" value="ECO:0007669"/>
    <property type="project" value="InterPro"/>
</dbReference>
<dbReference type="GO" id="GO:0000049">
    <property type="term" value="F:tRNA binding"/>
    <property type="evidence" value="ECO:0007669"/>
    <property type="project" value="UniProtKB-UniRule"/>
</dbReference>
<dbReference type="GO" id="GO:0006412">
    <property type="term" value="P:translation"/>
    <property type="evidence" value="ECO:0007669"/>
    <property type="project" value="UniProtKB-UniRule"/>
</dbReference>
<dbReference type="FunFam" id="3.30.1440.10:FF:000001">
    <property type="entry name" value="50S ribosomal protein L5"/>
    <property type="match status" value="1"/>
</dbReference>
<dbReference type="Gene3D" id="3.30.1440.10">
    <property type="match status" value="1"/>
</dbReference>
<dbReference type="HAMAP" id="MF_01333_B">
    <property type="entry name" value="Ribosomal_uL5_B"/>
    <property type="match status" value="1"/>
</dbReference>
<dbReference type="InterPro" id="IPR002132">
    <property type="entry name" value="Ribosomal_uL5"/>
</dbReference>
<dbReference type="InterPro" id="IPR020930">
    <property type="entry name" value="Ribosomal_uL5_bac-type"/>
</dbReference>
<dbReference type="InterPro" id="IPR031309">
    <property type="entry name" value="Ribosomal_uL5_C"/>
</dbReference>
<dbReference type="InterPro" id="IPR020929">
    <property type="entry name" value="Ribosomal_uL5_CS"/>
</dbReference>
<dbReference type="InterPro" id="IPR022803">
    <property type="entry name" value="Ribosomal_uL5_dom_sf"/>
</dbReference>
<dbReference type="InterPro" id="IPR031310">
    <property type="entry name" value="Ribosomal_uL5_N"/>
</dbReference>
<dbReference type="NCBIfam" id="NF000585">
    <property type="entry name" value="PRK00010.1"/>
    <property type="match status" value="1"/>
</dbReference>
<dbReference type="PANTHER" id="PTHR11994">
    <property type="entry name" value="60S RIBOSOMAL PROTEIN L11-RELATED"/>
    <property type="match status" value="1"/>
</dbReference>
<dbReference type="Pfam" id="PF00281">
    <property type="entry name" value="Ribosomal_L5"/>
    <property type="match status" value="1"/>
</dbReference>
<dbReference type="Pfam" id="PF00673">
    <property type="entry name" value="Ribosomal_L5_C"/>
    <property type="match status" value="1"/>
</dbReference>
<dbReference type="PIRSF" id="PIRSF002161">
    <property type="entry name" value="Ribosomal_L5"/>
    <property type="match status" value="1"/>
</dbReference>
<dbReference type="SUPFAM" id="SSF55282">
    <property type="entry name" value="RL5-like"/>
    <property type="match status" value="1"/>
</dbReference>
<dbReference type="PROSITE" id="PS00358">
    <property type="entry name" value="RIBOSOMAL_L5"/>
    <property type="match status" value="1"/>
</dbReference>
<evidence type="ECO:0000255" key="1">
    <source>
        <dbReference type="HAMAP-Rule" id="MF_01333"/>
    </source>
</evidence>
<evidence type="ECO:0000305" key="2"/>
<organism>
    <name type="scientific">Wolbachia sp. subsp. Drosophila simulans (strain wRi)</name>
    <dbReference type="NCBI Taxonomy" id="66084"/>
    <lineage>
        <taxon>Bacteria</taxon>
        <taxon>Pseudomonadati</taxon>
        <taxon>Pseudomonadota</taxon>
        <taxon>Alphaproteobacteria</taxon>
        <taxon>Rickettsiales</taxon>
        <taxon>Anaplasmataceae</taxon>
        <taxon>Wolbachieae</taxon>
        <taxon>Wolbachia</taxon>
    </lineage>
</organism>
<gene>
    <name evidence="1" type="primary">rplE</name>
    <name type="ordered locus">WRi_005070</name>
</gene>
<name>RL5_WOLWR</name>
<reference key="1">
    <citation type="journal article" date="2009" name="Proc. Natl. Acad. Sci. U.S.A.">
        <title>The mosaic genome structure of the Wolbachia wRi strain infecting Drosophila simulans.</title>
        <authorList>
            <person name="Klasson L."/>
            <person name="Westberg J."/>
            <person name="Sapountzis P."/>
            <person name="Naeslund K."/>
            <person name="Lutnaes Y."/>
            <person name="Darby A.C."/>
            <person name="Veneti Z."/>
            <person name="Chen L."/>
            <person name="Braig H.R."/>
            <person name="Garrett R."/>
            <person name="Bourtzis K."/>
            <person name="Andersson S.G."/>
        </authorList>
    </citation>
    <scope>NUCLEOTIDE SEQUENCE [LARGE SCALE GENOMIC DNA]</scope>
    <source>
        <strain>wRi</strain>
    </source>
</reference>